<keyword id="KW-0134">Cell wall</keyword>
<keyword id="KW-0963">Cytoplasm</keyword>
<keyword id="KW-0324">Glycolysis</keyword>
<keyword id="KW-0456">Lyase</keyword>
<keyword id="KW-0460">Magnesium</keyword>
<keyword id="KW-0479">Metal-binding</keyword>
<keyword id="KW-0964">Secreted</keyword>
<protein>
    <recommendedName>
        <fullName evidence="1">Enolase</fullName>
        <ecNumber evidence="1">4.2.1.11</ecNumber>
    </recommendedName>
    <alternativeName>
        <fullName evidence="1">2-phospho-D-glycerate hydro-lyase</fullName>
    </alternativeName>
    <alternativeName>
        <fullName evidence="1">2-phosphoglycerate dehydratase</fullName>
    </alternativeName>
</protein>
<sequence>MSIITDVYAREVLDSRGNPTLEVEVYTESGAFGRGMVPSGASTGEHEAVELRDGDKSRYLGLGTQKAVDNVNNIIAEAIIGYDVRDQQAIDRAMIALDGTPNKGKLGANAILGVSIAVARAAADYLEVPLYTYLGGFNTKVLPTPMMNIINGGSHSDAPIAFQEFMIMPVGAPTFKEGLRWGAEVFHALKKILKERGLVTAVGDEGGFAPKFEGTEDGVETILKAIEAAGYEAGENGIMIGFDCASSEFYDKERKVYDYTKFEGEGAAVRTSAEQVDYLEELVNKYPIITIEDGMDENDWDGWKVLTERLGKRVQLVGDDFFVTNTEYLARGIKENAANSILIKVNQIGTLTETFEAIEMAKEAGYTAVVSHRSGETEDSTIADIAVATNAGQIKTGSLSRTDRIAKYNQLLRIEDQLGEVAQYKGIKSFYNLKK</sequence>
<evidence type="ECO:0000255" key="1">
    <source>
        <dbReference type="HAMAP-Rule" id="MF_00318"/>
    </source>
</evidence>
<evidence type="ECO:0000269" key="2">
    <source>
    </source>
</evidence>
<evidence type="ECO:0000305" key="3">
    <source>
    </source>
</evidence>
<gene>
    <name evidence="1" type="primary">eno</name>
    <name type="ordered locus">Spy49_0563</name>
</gene>
<reference key="1">
    <citation type="journal article" date="2008" name="J. Bacteriol.">
        <title>Genome sequence of a nephritogenic and highly transformable M49 strain of Streptococcus pyogenes.</title>
        <authorList>
            <person name="McShan W.M."/>
            <person name="Ferretti J.J."/>
            <person name="Karasawa T."/>
            <person name="Suvorov A.N."/>
            <person name="Lin S."/>
            <person name="Qin B."/>
            <person name="Jia H."/>
            <person name="Kenton S."/>
            <person name="Najar F."/>
            <person name="Wu H."/>
            <person name="Scott J."/>
            <person name="Roe B.A."/>
            <person name="Savic D.J."/>
        </authorList>
    </citation>
    <scope>NUCLEOTIDE SEQUENCE [LARGE SCALE GENOMIC DNA]</scope>
    <source>
        <strain>NZ131</strain>
    </source>
</reference>
<reference key="2">
    <citation type="journal article" date="1998" name="J. Biol. Chem.">
        <title>Alpha-enolase, a novel strong plasmin(ogen) binding protein on the surface of pathogenic streptococci.</title>
        <authorList>
            <person name="Pancholi V."/>
            <person name="Fischetti V.A."/>
        </authorList>
    </citation>
    <scope>SUBCELLULAR LOCATION</scope>
    <source>
        <strain>B910 / Serotype M49</strain>
    </source>
</reference>
<dbReference type="EC" id="4.2.1.11" evidence="1"/>
<dbReference type="EMBL" id="CP000829">
    <property type="protein sequence ID" value="ACI60889.1"/>
    <property type="molecule type" value="Genomic_DNA"/>
</dbReference>
<dbReference type="SMR" id="B5XKM7"/>
<dbReference type="KEGG" id="soz:Spy49_0563"/>
<dbReference type="HOGENOM" id="CLU_031223_2_1_9"/>
<dbReference type="UniPathway" id="UPA00109">
    <property type="reaction ID" value="UER00187"/>
</dbReference>
<dbReference type="Proteomes" id="UP000001039">
    <property type="component" value="Chromosome"/>
</dbReference>
<dbReference type="GO" id="GO:0009986">
    <property type="term" value="C:cell surface"/>
    <property type="evidence" value="ECO:0007669"/>
    <property type="project" value="UniProtKB-SubCell"/>
</dbReference>
<dbReference type="GO" id="GO:0005576">
    <property type="term" value="C:extracellular region"/>
    <property type="evidence" value="ECO:0007669"/>
    <property type="project" value="UniProtKB-SubCell"/>
</dbReference>
<dbReference type="GO" id="GO:0009274">
    <property type="term" value="C:peptidoglycan-based cell wall"/>
    <property type="evidence" value="ECO:0000314"/>
    <property type="project" value="CAFA"/>
</dbReference>
<dbReference type="GO" id="GO:0000015">
    <property type="term" value="C:phosphopyruvate hydratase complex"/>
    <property type="evidence" value="ECO:0007669"/>
    <property type="project" value="InterPro"/>
</dbReference>
<dbReference type="GO" id="GO:0000287">
    <property type="term" value="F:magnesium ion binding"/>
    <property type="evidence" value="ECO:0007669"/>
    <property type="project" value="UniProtKB-UniRule"/>
</dbReference>
<dbReference type="GO" id="GO:0004634">
    <property type="term" value="F:phosphopyruvate hydratase activity"/>
    <property type="evidence" value="ECO:0007669"/>
    <property type="project" value="UniProtKB-UniRule"/>
</dbReference>
<dbReference type="GO" id="GO:0006096">
    <property type="term" value="P:glycolytic process"/>
    <property type="evidence" value="ECO:0007669"/>
    <property type="project" value="UniProtKB-UniRule"/>
</dbReference>
<dbReference type="CDD" id="cd03313">
    <property type="entry name" value="enolase"/>
    <property type="match status" value="1"/>
</dbReference>
<dbReference type="FunFam" id="3.20.20.120:FF:000001">
    <property type="entry name" value="Enolase"/>
    <property type="match status" value="1"/>
</dbReference>
<dbReference type="FunFam" id="3.30.390.10:FF:000001">
    <property type="entry name" value="Enolase"/>
    <property type="match status" value="1"/>
</dbReference>
<dbReference type="Gene3D" id="3.20.20.120">
    <property type="entry name" value="Enolase-like C-terminal domain"/>
    <property type="match status" value="1"/>
</dbReference>
<dbReference type="Gene3D" id="3.30.390.10">
    <property type="entry name" value="Enolase-like, N-terminal domain"/>
    <property type="match status" value="1"/>
</dbReference>
<dbReference type="HAMAP" id="MF_00318">
    <property type="entry name" value="Enolase"/>
    <property type="match status" value="1"/>
</dbReference>
<dbReference type="InterPro" id="IPR000941">
    <property type="entry name" value="Enolase"/>
</dbReference>
<dbReference type="InterPro" id="IPR036849">
    <property type="entry name" value="Enolase-like_C_sf"/>
</dbReference>
<dbReference type="InterPro" id="IPR029017">
    <property type="entry name" value="Enolase-like_N"/>
</dbReference>
<dbReference type="InterPro" id="IPR020810">
    <property type="entry name" value="Enolase_C"/>
</dbReference>
<dbReference type="InterPro" id="IPR020809">
    <property type="entry name" value="Enolase_CS"/>
</dbReference>
<dbReference type="InterPro" id="IPR020811">
    <property type="entry name" value="Enolase_N"/>
</dbReference>
<dbReference type="NCBIfam" id="TIGR01060">
    <property type="entry name" value="eno"/>
    <property type="match status" value="1"/>
</dbReference>
<dbReference type="PANTHER" id="PTHR11902">
    <property type="entry name" value="ENOLASE"/>
    <property type="match status" value="1"/>
</dbReference>
<dbReference type="PANTHER" id="PTHR11902:SF1">
    <property type="entry name" value="ENOLASE"/>
    <property type="match status" value="1"/>
</dbReference>
<dbReference type="Pfam" id="PF00113">
    <property type="entry name" value="Enolase_C"/>
    <property type="match status" value="1"/>
</dbReference>
<dbReference type="Pfam" id="PF03952">
    <property type="entry name" value="Enolase_N"/>
    <property type="match status" value="1"/>
</dbReference>
<dbReference type="PIRSF" id="PIRSF001400">
    <property type="entry name" value="Enolase"/>
    <property type="match status" value="1"/>
</dbReference>
<dbReference type="PRINTS" id="PR00148">
    <property type="entry name" value="ENOLASE"/>
</dbReference>
<dbReference type="SFLD" id="SFLDS00001">
    <property type="entry name" value="Enolase"/>
    <property type="match status" value="1"/>
</dbReference>
<dbReference type="SFLD" id="SFLDF00002">
    <property type="entry name" value="enolase"/>
    <property type="match status" value="1"/>
</dbReference>
<dbReference type="SMART" id="SM01192">
    <property type="entry name" value="Enolase_C"/>
    <property type="match status" value="1"/>
</dbReference>
<dbReference type="SMART" id="SM01193">
    <property type="entry name" value="Enolase_N"/>
    <property type="match status" value="1"/>
</dbReference>
<dbReference type="SUPFAM" id="SSF51604">
    <property type="entry name" value="Enolase C-terminal domain-like"/>
    <property type="match status" value="1"/>
</dbReference>
<dbReference type="SUPFAM" id="SSF54826">
    <property type="entry name" value="Enolase N-terminal domain-like"/>
    <property type="match status" value="1"/>
</dbReference>
<dbReference type="PROSITE" id="PS00164">
    <property type="entry name" value="ENOLASE"/>
    <property type="match status" value="1"/>
</dbReference>
<name>ENO_STRPZ</name>
<organism>
    <name type="scientific">Streptococcus pyogenes serotype M49 (strain NZ131)</name>
    <dbReference type="NCBI Taxonomy" id="471876"/>
    <lineage>
        <taxon>Bacteria</taxon>
        <taxon>Bacillati</taxon>
        <taxon>Bacillota</taxon>
        <taxon>Bacilli</taxon>
        <taxon>Lactobacillales</taxon>
        <taxon>Streptococcaceae</taxon>
        <taxon>Streptococcus</taxon>
    </lineage>
</organism>
<accession>B5XKM7</accession>
<feature type="chain" id="PRO_1000115922" description="Enolase">
    <location>
        <begin position="1"/>
        <end position="435"/>
    </location>
</feature>
<feature type="active site" description="Proton donor" evidence="1">
    <location>
        <position position="205"/>
    </location>
</feature>
<feature type="active site" description="Proton acceptor" evidence="1">
    <location>
        <position position="344"/>
    </location>
</feature>
<feature type="binding site" evidence="1">
    <location>
        <position position="163"/>
    </location>
    <ligand>
        <name>(2R)-2-phosphoglycerate</name>
        <dbReference type="ChEBI" id="CHEBI:58289"/>
    </ligand>
</feature>
<feature type="binding site" evidence="1">
    <location>
        <position position="243"/>
    </location>
    <ligand>
        <name>Mg(2+)</name>
        <dbReference type="ChEBI" id="CHEBI:18420"/>
    </ligand>
</feature>
<feature type="binding site" evidence="1">
    <location>
        <position position="292"/>
    </location>
    <ligand>
        <name>Mg(2+)</name>
        <dbReference type="ChEBI" id="CHEBI:18420"/>
    </ligand>
</feature>
<feature type="binding site" evidence="1">
    <location>
        <position position="319"/>
    </location>
    <ligand>
        <name>Mg(2+)</name>
        <dbReference type="ChEBI" id="CHEBI:18420"/>
    </ligand>
</feature>
<feature type="binding site" evidence="1">
    <location>
        <position position="344"/>
    </location>
    <ligand>
        <name>(2R)-2-phosphoglycerate</name>
        <dbReference type="ChEBI" id="CHEBI:58289"/>
    </ligand>
</feature>
<feature type="binding site" evidence="1">
    <location>
        <position position="373"/>
    </location>
    <ligand>
        <name>(2R)-2-phosphoglycerate</name>
        <dbReference type="ChEBI" id="CHEBI:58289"/>
    </ligand>
</feature>
<feature type="binding site" evidence="1">
    <location>
        <position position="374"/>
    </location>
    <ligand>
        <name>(2R)-2-phosphoglycerate</name>
        <dbReference type="ChEBI" id="CHEBI:58289"/>
    </ligand>
</feature>
<feature type="binding site" evidence="1">
    <location>
        <position position="395"/>
    </location>
    <ligand>
        <name>(2R)-2-phosphoglycerate</name>
        <dbReference type="ChEBI" id="CHEBI:58289"/>
    </ligand>
</feature>
<comment type="function">
    <text evidence="1">Catalyzes the reversible conversion of 2-phosphoglycerate (2-PG) into phosphoenolpyruvate (PEP). It is essential for the degradation of carbohydrates via glycolysis.</text>
</comment>
<comment type="catalytic activity">
    <reaction evidence="1">
        <text>(2R)-2-phosphoglycerate = phosphoenolpyruvate + H2O</text>
        <dbReference type="Rhea" id="RHEA:10164"/>
        <dbReference type="ChEBI" id="CHEBI:15377"/>
        <dbReference type="ChEBI" id="CHEBI:58289"/>
        <dbReference type="ChEBI" id="CHEBI:58702"/>
        <dbReference type="EC" id="4.2.1.11"/>
    </reaction>
</comment>
<comment type="cofactor">
    <cofactor evidence="1">
        <name>Mg(2+)</name>
        <dbReference type="ChEBI" id="CHEBI:18420"/>
    </cofactor>
    <text evidence="1">Binds a second Mg(2+) ion via substrate during catalysis.</text>
</comment>
<comment type="pathway">
    <text evidence="1">Carbohydrate degradation; glycolysis; pyruvate from D-glyceraldehyde 3-phosphate: step 4/5.</text>
</comment>
<comment type="subcellular location">
    <subcellularLocation>
        <location evidence="1">Cytoplasm</location>
    </subcellularLocation>
    <subcellularLocation>
        <location evidence="1">Secreted</location>
    </subcellularLocation>
    <subcellularLocation>
        <location evidence="1 3">Cell surface</location>
    </subcellularLocation>
    <subcellularLocation>
        <location evidence="2">Secreted</location>
        <location evidence="2">Cell wall</location>
    </subcellularLocation>
    <text evidence="1 3">Fractions of enolase are present in both the cytoplasm and on the cell surface (Probable) (PubMed:9603964).</text>
</comment>
<comment type="similarity">
    <text evidence="1">Belongs to the enolase family.</text>
</comment>
<proteinExistence type="inferred from homology"/>